<reference key="1">
    <citation type="journal article" date="2002" name="J. Bacteriol.">
        <title>Whole-genome comparison of Mycobacterium tuberculosis clinical and laboratory strains.</title>
        <authorList>
            <person name="Fleischmann R.D."/>
            <person name="Alland D."/>
            <person name="Eisen J.A."/>
            <person name="Carpenter L."/>
            <person name="White O."/>
            <person name="Peterson J.D."/>
            <person name="DeBoy R.T."/>
            <person name="Dodson R.J."/>
            <person name="Gwinn M.L."/>
            <person name="Haft D.H."/>
            <person name="Hickey E.K."/>
            <person name="Kolonay J.F."/>
            <person name="Nelson W.C."/>
            <person name="Umayam L.A."/>
            <person name="Ermolaeva M.D."/>
            <person name="Salzberg S.L."/>
            <person name="Delcher A."/>
            <person name="Utterback T.R."/>
            <person name="Weidman J.F."/>
            <person name="Khouri H.M."/>
            <person name="Gill J."/>
            <person name="Mikula A."/>
            <person name="Bishai W."/>
            <person name="Jacobs W.R. Jr."/>
            <person name="Venter J.C."/>
            <person name="Fraser C.M."/>
        </authorList>
    </citation>
    <scope>NUCLEOTIDE SEQUENCE [LARGE SCALE GENOMIC DNA]</scope>
    <source>
        <strain>CDC 1551 / Oshkosh</strain>
    </source>
</reference>
<gene>
    <name evidence="1" type="primary">pimA</name>
    <name type="ordered locus">MT2685</name>
</gene>
<keyword id="KW-1003">Cell membrane</keyword>
<keyword id="KW-0328">Glycosyltransferase</keyword>
<keyword id="KW-0444">Lipid biosynthesis</keyword>
<keyword id="KW-0443">Lipid metabolism</keyword>
<keyword id="KW-0460">Magnesium</keyword>
<keyword id="KW-0472">Membrane</keyword>
<keyword id="KW-0594">Phospholipid biosynthesis</keyword>
<keyword id="KW-1208">Phospholipid metabolism</keyword>
<keyword id="KW-1185">Reference proteome</keyword>
<keyword id="KW-0808">Transferase</keyword>
<keyword id="KW-0843">Virulence</keyword>
<sequence length="378" mass="40445">MRIGMICPYSFDVPGGVQSHVLQLAEVMRTRGHLVSVLAPASPHAALPDYFVSGGRAVPIPYNGSVARLRFGPATHRKVKKWLAHGDFDVLHLHEPNAPSLSMLALNIAEGPIVATFHTSTTKSLTLTVFQGILRPMHEKIVGRIAVSDLARRWQMEALGSDAVEIPNGVDVDSFASAARLDGYPRQGKTVLFLGRYDEPRKGMAVLLDALPKVVQRFPDVQLLIVGHGDADQLRGQAGRLAAHLRFLGQVDDAGKASAMRSADVYCAPNTGGESFGIVLVEAMAAGTAVVASDLDAFRRVLRDGEVGHLVPVDPPDLQAAALADGLIAVLENDVLRERYVAAGNAAVRRYDWSVVASQIMRVYETVAGSGAKVQVAS</sequence>
<dbReference type="EC" id="2.4.1.345" evidence="1"/>
<dbReference type="EMBL" id="AE000516">
    <property type="protein sequence ID" value="AAK47001.1"/>
    <property type="molecule type" value="Genomic_DNA"/>
</dbReference>
<dbReference type="PIR" id="A70571">
    <property type="entry name" value="A70571"/>
</dbReference>
<dbReference type="RefSeq" id="WP_003413478.1">
    <property type="nucleotide sequence ID" value="NZ_KK341227.1"/>
</dbReference>
<dbReference type="RefSeq" id="WP_010924554.1">
    <property type="nucleotide sequence ID" value="NC_002755.2"/>
</dbReference>
<dbReference type="SMR" id="P9WMZ4"/>
<dbReference type="CAZy" id="GT4">
    <property type="family name" value="Glycosyltransferase Family 4"/>
</dbReference>
<dbReference type="GeneID" id="45426613"/>
<dbReference type="KEGG" id="mtc:MT2685"/>
<dbReference type="PATRIC" id="fig|83331.31.peg.2895"/>
<dbReference type="HOGENOM" id="CLU_009583_2_1_11"/>
<dbReference type="UniPathway" id="UPA00949"/>
<dbReference type="Proteomes" id="UP000001020">
    <property type="component" value="Chromosome"/>
</dbReference>
<dbReference type="GO" id="GO:0005886">
    <property type="term" value="C:plasma membrane"/>
    <property type="evidence" value="ECO:0007669"/>
    <property type="project" value="UniProtKB-SubCell"/>
</dbReference>
<dbReference type="GO" id="GO:0004377">
    <property type="term" value="F:GDP-Man:Man3GlcNAc2-PP-Dol alpha-1,2-mannosyltransferase activity"/>
    <property type="evidence" value="ECO:0000250"/>
    <property type="project" value="UniProtKB"/>
</dbReference>
<dbReference type="GO" id="GO:0043750">
    <property type="term" value="F:phosphatidylinositol alpha-mannosyltransferase activity"/>
    <property type="evidence" value="ECO:0000250"/>
    <property type="project" value="UniProtKB"/>
</dbReference>
<dbReference type="GO" id="GO:0009247">
    <property type="term" value="P:glycolipid biosynthetic process"/>
    <property type="evidence" value="ECO:0000250"/>
    <property type="project" value="UniProtKB"/>
</dbReference>
<dbReference type="GO" id="GO:0046488">
    <property type="term" value="P:phosphatidylinositol metabolic process"/>
    <property type="evidence" value="ECO:0000250"/>
    <property type="project" value="UniProtKB"/>
</dbReference>
<dbReference type="GO" id="GO:0008654">
    <property type="term" value="P:phospholipid biosynthetic process"/>
    <property type="evidence" value="ECO:0007669"/>
    <property type="project" value="UniProtKB-KW"/>
</dbReference>
<dbReference type="CDD" id="cd03801">
    <property type="entry name" value="GT4_PimA-like"/>
    <property type="match status" value="1"/>
</dbReference>
<dbReference type="FunFam" id="3.40.50.2000:FF:000207">
    <property type="entry name" value="Phosphatidyl-myo-inositol mannosyltransferase"/>
    <property type="match status" value="1"/>
</dbReference>
<dbReference type="Gene3D" id="3.40.50.2000">
    <property type="entry name" value="Glycogen Phosphorylase B"/>
    <property type="match status" value="2"/>
</dbReference>
<dbReference type="InterPro" id="IPR028098">
    <property type="entry name" value="Glyco_trans_4-like_N"/>
</dbReference>
<dbReference type="InterPro" id="IPR050194">
    <property type="entry name" value="Glycosyltransferase_grp1"/>
</dbReference>
<dbReference type="PANTHER" id="PTHR45947">
    <property type="entry name" value="SULFOQUINOVOSYL TRANSFERASE SQD2"/>
    <property type="match status" value="1"/>
</dbReference>
<dbReference type="PANTHER" id="PTHR45947:SF3">
    <property type="entry name" value="SULFOQUINOVOSYL TRANSFERASE SQD2"/>
    <property type="match status" value="1"/>
</dbReference>
<dbReference type="Pfam" id="PF13692">
    <property type="entry name" value="Glyco_trans_1_4"/>
    <property type="match status" value="1"/>
</dbReference>
<dbReference type="Pfam" id="PF13439">
    <property type="entry name" value="Glyco_transf_4"/>
    <property type="match status" value="1"/>
</dbReference>
<dbReference type="SUPFAM" id="SSF53756">
    <property type="entry name" value="UDP-Glycosyltransferase/glycogen phosphorylase"/>
    <property type="match status" value="1"/>
</dbReference>
<protein>
    <recommendedName>
        <fullName evidence="1">Phosphatidyl-myo-inositol mannosyltransferase</fullName>
        <ecNumber evidence="1">2.4.1.345</ecNumber>
    </recommendedName>
    <alternativeName>
        <fullName evidence="1">Alpha-mannosyltransferase</fullName>
    </alternativeName>
    <alternativeName>
        <fullName evidence="1">GDP-mannose-dependent alpha-(1-2)-phosphatidylinositol mannosyltransferase</fullName>
    </alternativeName>
    <alternativeName>
        <fullName evidence="3">Guanosine diphosphomannose-phosphatidyl-inositol alpha-mannosyltransferase</fullName>
    </alternativeName>
    <alternativeName>
        <fullName evidence="1">Phosphatidylinositol alpha-mannosyltransferase</fullName>
        <shortName evidence="1">PI alpha-mannosyltransferase</shortName>
    </alternativeName>
</protein>
<name>PIMA_MYCTO</name>
<feature type="chain" id="PRO_0000427216" description="Phosphatidyl-myo-inositol mannosyltransferase">
    <location>
        <begin position="1"/>
        <end position="378"/>
    </location>
</feature>
<feature type="binding site" evidence="1">
    <location>
        <position position="9"/>
    </location>
    <ligand>
        <name>GDP-alpha-D-mannose</name>
        <dbReference type="ChEBI" id="CHEBI:57527"/>
    </ligand>
</feature>
<feature type="binding site" evidence="1">
    <location>
        <position position="16"/>
    </location>
    <ligand>
        <name>GDP-alpha-D-mannose</name>
        <dbReference type="ChEBI" id="CHEBI:57527"/>
    </ligand>
</feature>
<feature type="binding site" evidence="1">
    <location>
        <position position="18"/>
    </location>
    <ligand>
        <name>a 1,2-diacyl-sn-glycero-3-phospho-(1D-myo-inositol)</name>
        <dbReference type="ChEBI" id="CHEBI:57880"/>
    </ligand>
</feature>
<feature type="binding site" evidence="1">
    <location>
        <begin position="62"/>
        <end position="63"/>
    </location>
    <ligand>
        <name>a 1,2-diacyl-sn-glycero-3-phospho-(1D-myo-inositol)</name>
        <dbReference type="ChEBI" id="CHEBI:57880"/>
    </ligand>
</feature>
<feature type="binding site" evidence="1">
    <location>
        <position position="68"/>
    </location>
    <ligand>
        <name>a 1,2-diacyl-sn-glycero-3-phospho-(1D-myo-inositol)</name>
        <dbReference type="ChEBI" id="CHEBI:57880"/>
    </ligand>
</feature>
<feature type="binding site" evidence="1">
    <location>
        <position position="196"/>
    </location>
    <ligand>
        <name>GDP-alpha-D-mannose</name>
        <dbReference type="ChEBI" id="CHEBI:57527"/>
    </ligand>
</feature>
<feature type="binding site" evidence="1">
    <location>
        <begin position="201"/>
        <end position="202"/>
    </location>
    <ligand>
        <name>GDP-alpha-D-mannose</name>
        <dbReference type="ChEBI" id="CHEBI:57527"/>
    </ligand>
</feature>
<feature type="binding site" evidence="1">
    <location>
        <begin position="251"/>
        <end position="253"/>
    </location>
    <ligand>
        <name>GDP-alpha-D-mannose</name>
        <dbReference type="ChEBI" id="CHEBI:57527"/>
    </ligand>
</feature>
<feature type="binding site" evidence="1">
    <location>
        <position position="256"/>
    </location>
    <ligand>
        <name>GDP-alpha-D-mannose</name>
        <dbReference type="ChEBI" id="CHEBI:57527"/>
    </ligand>
</feature>
<feature type="binding site" evidence="1">
    <location>
        <begin position="274"/>
        <end position="278"/>
    </location>
    <ligand>
        <name>GDP-alpha-D-mannose</name>
        <dbReference type="ChEBI" id="CHEBI:57527"/>
    </ligand>
</feature>
<feature type="binding site" evidence="1">
    <location>
        <position position="282"/>
    </location>
    <ligand>
        <name>GDP-alpha-D-mannose</name>
        <dbReference type="ChEBI" id="CHEBI:57527"/>
    </ligand>
</feature>
<feature type="site" description="Important for catalytic activity" evidence="1">
    <location>
        <position position="118"/>
    </location>
</feature>
<comment type="function">
    <text evidence="1">Involved in the biosynthesis of phosphatidyl-myo-inositol mannosides (PIM) which are early precursors in the biosynthesis of lipomannans (LM) and lipoarabinomannans (LAM). Catalyzes the addition of a mannosyl residue from GDP-D-mannose (GDP-Man) to the position 2 of the carrier lipid phosphatidyl-myo-inositol (PI) to generate a phosphatidyl-myo-inositol bearing an alpha-1,2-linked mannose residue (PIM1).</text>
</comment>
<comment type="catalytic activity">
    <reaction evidence="1">
        <text>a 1,2-diacyl-sn-glycero-3-phospho-(1D-myo-inositol) + GDP-alpha-D-mannose = a 1,2-diacyl-sn-glycero-3-phospho-[alpha-D-mannopyranosyl-(1&lt;-&gt;6)-D-myo-inositol] + GDP + H(+)</text>
        <dbReference type="Rhea" id="RHEA:47368"/>
        <dbReference type="ChEBI" id="CHEBI:15378"/>
        <dbReference type="ChEBI" id="CHEBI:57527"/>
        <dbReference type="ChEBI" id="CHEBI:57880"/>
        <dbReference type="ChEBI" id="CHEBI:58189"/>
        <dbReference type="ChEBI" id="CHEBI:87673"/>
        <dbReference type="EC" id="2.4.1.345"/>
    </reaction>
</comment>
<comment type="cofactor">
    <cofactor evidence="2">
        <name>Mg(2+)</name>
        <dbReference type="ChEBI" id="CHEBI:18420"/>
    </cofactor>
</comment>
<comment type="pathway">
    <text evidence="1">Phospholipid metabolism; phosphatidylinositol metabolism.</text>
</comment>
<comment type="subunit">
    <text evidence="1">Monomer.</text>
</comment>
<comment type="subcellular location">
    <subcellularLocation>
        <location evidence="1">Cell membrane</location>
        <topology evidence="1">Peripheral membrane protein</topology>
        <orientation evidence="1">Cytoplasmic side</orientation>
    </subcellularLocation>
</comment>
<comment type="similarity">
    <text evidence="3">Belongs to the glycosyltransferase group 1 family. Glycosyltransferase 4 subfamily.</text>
</comment>
<evidence type="ECO:0000250" key="1">
    <source>
        <dbReference type="UniProtKB" id="A0QWG6"/>
    </source>
</evidence>
<evidence type="ECO:0000250" key="2">
    <source>
        <dbReference type="UniProtKB" id="P9WMZ5"/>
    </source>
</evidence>
<evidence type="ECO:0000305" key="3"/>
<accession>P9WMZ4</accession>
<accession>L0TD24</accession>
<accession>O06204</accession>
<accession>Q8VJF2</accession>
<organism>
    <name type="scientific">Mycobacterium tuberculosis (strain CDC 1551 / Oshkosh)</name>
    <dbReference type="NCBI Taxonomy" id="83331"/>
    <lineage>
        <taxon>Bacteria</taxon>
        <taxon>Bacillati</taxon>
        <taxon>Actinomycetota</taxon>
        <taxon>Actinomycetes</taxon>
        <taxon>Mycobacteriales</taxon>
        <taxon>Mycobacteriaceae</taxon>
        <taxon>Mycobacterium</taxon>
        <taxon>Mycobacterium tuberculosis complex</taxon>
    </lineage>
</organism>
<proteinExistence type="inferred from homology"/>